<organism>
    <name type="scientific">Chlamydomonas reinhardtii</name>
    <name type="common">Chlamydomonas smithii</name>
    <dbReference type="NCBI Taxonomy" id="3055"/>
    <lineage>
        <taxon>Eukaryota</taxon>
        <taxon>Viridiplantae</taxon>
        <taxon>Chlorophyta</taxon>
        <taxon>core chlorophytes</taxon>
        <taxon>Chlorophyceae</taxon>
        <taxon>CS clade</taxon>
        <taxon>Chlamydomonadales</taxon>
        <taxon>Chlamydomonadaceae</taxon>
        <taxon>Chlamydomonas</taxon>
    </lineage>
</organism>
<dbReference type="EC" id="7.1.1.2"/>
<dbReference type="EMBL" id="X54860">
    <property type="protein sequence ID" value="CAA38641.1"/>
    <property type="status" value="ALT_INIT"/>
    <property type="molecule type" value="Genomic_DNA"/>
</dbReference>
<dbReference type="EMBL" id="U03843">
    <property type="protein sequence ID" value="AAB93442.1"/>
    <property type="molecule type" value="Genomic_DNA"/>
</dbReference>
<dbReference type="EMBL" id="X66484">
    <property type="protein sequence ID" value="CAA47113.1"/>
    <property type="molecule type" value="Genomic_DNA"/>
</dbReference>
<dbReference type="EMBL" id="X03464">
    <property type="protein sequence ID" value="CAA27181.1"/>
    <property type="molecule type" value="Genomic_DNA"/>
</dbReference>
<dbReference type="PIR" id="B24707">
    <property type="entry name" value="B24707"/>
</dbReference>
<dbReference type="RefSeq" id="NP_042566.1">
    <property type="nucleotide sequence ID" value="NC_001638.1"/>
</dbReference>
<dbReference type="PDB" id="9F5X">
    <property type="method" value="EM"/>
    <property type="resolution" value="2.82 A"/>
    <property type="chains" value="V=1-546"/>
</dbReference>
<dbReference type="PDB" id="9F5Y">
    <property type="method" value="EM"/>
    <property type="resolution" value="2.51 A"/>
    <property type="chains" value="V=1-546"/>
</dbReference>
<dbReference type="PDB" id="9F62">
    <property type="method" value="EM"/>
    <property type="resolution" value="5.44 A"/>
    <property type="chains" value="5V/V=1-546"/>
</dbReference>
<dbReference type="PDBsum" id="9F5X"/>
<dbReference type="PDBsum" id="9F5Y"/>
<dbReference type="PDBsum" id="9F62"/>
<dbReference type="EMDB" id="EMD-50202"/>
<dbReference type="EMDB" id="EMD-50203"/>
<dbReference type="EMDB" id="EMD-50210"/>
<dbReference type="SMR" id="P08739"/>
<dbReference type="TCDB" id="3.D.1.6.4">
    <property type="family name" value="the h+ or na+-translocating nadh dehydrogenase (ndh) family"/>
</dbReference>
<dbReference type="PaxDb" id="3055-AAB93442"/>
<dbReference type="GeneID" id="801492"/>
<dbReference type="KEGG" id="cre:ChrepMp03"/>
<dbReference type="eggNOG" id="KOG4668">
    <property type="taxonomic scope" value="Eukaryota"/>
</dbReference>
<dbReference type="HOGENOM" id="CLU_007100_6_0_1"/>
<dbReference type="BioCyc" id="CHLAMY:CHREPMP03-MONOMER"/>
<dbReference type="GO" id="GO:0005743">
    <property type="term" value="C:mitochondrial inner membrane"/>
    <property type="evidence" value="ECO:0007669"/>
    <property type="project" value="UniProtKB-SubCell"/>
</dbReference>
<dbReference type="GO" id="GO:0008137">
    <property type="term" value="F:NADH dehydrogenase (ubiquinone) activity"/>
    <property type="evidence" value="ECO:0007669"/>
    <property type="project" value="UniProtKB-EC"/>
</dbReference>
<dbReference type="GO" id="GO:0042773">
    <property type="term" value="P:ATP synthesis coupled electron transport"/>
    <property type="evidence" value="ECO:0007669"/>
    <property type="project" value="InterPro"/>
</dbReference>
<dbReference type="InterPro" id="IPR018393">
    <property type="entry name" value="NADHpl_OxRdtase_5_subgr"/>
</dbReference>
<dbReference type="InterPro" id="IPR001750">
    <property type="entry name" value="ND/Mrp_TM"/>
</dbReference>
<dbReference type="InterPro" id="IPR003945">
    <property type="entry name" value="NU5C-like"/>
</dbReference>
<dbReference type="InterPro" id="IPR001516">
    <property type="entry name" value="Proton_antipo_N"/>
</dbReference>
<dbReference type="NCBIfam" id="TIGR01974">
    <property type="entry name" value="NDH_I_L"/>
    <property type="match status" value="1"/>
</dbReference>
<dbReference type="PANTHER" id="PTHR42829">
    <property type="entry name" value="NADH-UBIQUINONE OXIDOREDUCTASE CHAIN 5"/>
    <property type="match status" value="1"/>
</dbReference>
<dbReference type="PANTHER" id="PTHR42829:SF2">
    <property type="entry name" value="NADH-UBIQUINONE OXIDOREDUCTASE CHAIN 5"/>
    <property type="match status" value="1"/>
</dbReference>
<dbReference type="Pfam" id="PF00361">
    <property type="entry name" value="Proton_antipo_M"/>
    <property type="match status" value="1"/>
</dbReference>
<dbReference type="Pfam" id="PF00662">
    <property type="entry name" value="Proton_antipo_N"/>
    <property type="match status" value="1"/>
</dbReference>
<dbReference type="PRINTS" id="PR01434">
    <property type="entry name" value="NADHDHGNASE5"/>
</dbReference>
<proteinExistence type="evidence at protein level"/>
<feature type="chain" id="PRO_0000118080" description="NADH-ubiquinone oxidoreductase chain 5">
    <location>
        <begin position="1"/>
        <end position="546"/>
    </location>
</feature>
<feature type="transmembrane region" description="Helical" evidence="2">
    <location>
        <begin position="1"/>
        <end position="21"/>
    </location>
</feature>
<feature type="transmembrane region" description="Helical" evidence="2">
    <location>
        <begin position="31"/>
        <end position="51"/>
    </location>
</feature>
<feature type="transmembrane region" description="Helical" evidence="2">
    <location>
        <begin position="52"/>
        <end position="72"/>
    </location>
</feature>
<feature type="transmembrane region" description="Helical" evidence="2">
    <location>
        <begin position="82"/>
        <end position="102"/>
    </location>
</feature>
<feature type="transmembrane region" description="Helical" evidence="2">
    <location>
        <begin position="112"/>
        <end position="132"/>
    </location>
</feature>
<feature type="transmembrane region" description="Helical" evidence="2">
    <location>
        <begin position="135"/>
        <end position="155"/>
    </location>
</feature>
<feature type="transmembrane region" description="Helical" evidence="2">
    <location>
        <begin position="175"/>
        <end position="195"/>
    </location>
</feature>
<feature type="transmembrane region" description="Helical" evidence="2">
    <location>
        <begin position="198"/>
        <end position="218"/>
    </location>
</feature>
<feature type="transmembrane region" description="Helical" evidence="2">
    <location>
        <begin position="237"/>
        <end position="257"/>
    </location>
</feature>
<feature type="transmembrane region" description="Helical" evidence="2">
    <location>
        <begin position="264"/>
        <end position="284"/>
    </location>
</feature>
<feature type="transmembrane region" description="Helical" evidence="2">
    <location>
        <begin position="291"/>
        <end position="310"/>
    </location>
</feature>
<feature type="transmembrane region" description="Helical" evidence="2">
    <location>
        <begin position="321"/>
        <end position="341"/>
    </location>
</feature>
<feature type="transmembrane region" description="Helical" evidence="2">
    <location>
        <begin position="358"/>
        <end position="378"/>
    </location>
</feature>
<feature type="transmembrane region" description="Helical" evidence="2">
    <location>
        <begin position="387"/>
        <end position="407"/>
    </location>
</feature>
<feature type="transmembrane region" description="Helical" evidence="2">
    <location>
        <begin position="440"/>
        <end position="460"/>
    </location>
</feature>
<feature type="transmembrane region" description="Helical" evidence="2">
    <location>
        <begin position="468"/>
        <end position="488"/>
    </location>
</feature>
<feature type="sequence conflict" description="In Ref. 3." evidence="3" ref="3">
    <original>M</original>
    <variation>MSSSLVQINELANREISLLFPM</variation>
    <location>
        <position position="1"/>
    </location>
</feature>
<feature type="sequence conflict" description="In Ref. 1 and 5." evidence="3" ref="1 5">
    <original>G</original>
    <variation>A</variation>
    <location>
        <position position="206"/>
    </location>
</feature>
<feature type="sequence conflict" description="In Ref. 1 and 5." evidence="3" ref="1 5">
    <original>I</original>
    <variation>S</variation>
    <location>
        <position position="292"/>
    </location>
</feature>
<name>NU5M_CHLRE</name>
<sequence length="546" mass="59048">MFLLSVFFPLLGGLVNTSPIARFLGHRGSSIIAIGCMVVAFISSVVIYYEVVFMGCAVSVDVFGTWFSVGTFHAGWTFNFDLLTANMLFTVTGVSMAVHMYACDYMRQDPHLNLFLGYLSYFTGFMCVLVAADNLLVMLVGWEGIGVCSYLLIGYWSHRLSAVKSAQKAILVNRVSDGLLMWGVLWVWYHLGSLEYDLLNVYSASGFVGLSILIGAMGKSAQILFHVWLADAMEGPTPVSALIHAATLVTAGVYLLVRLHIHDEMFVIIVGSLTAFMAGVFGATQSDLKRVIAYSTCSQLGYMMVSLGLGETGGEASMGHLMTHASFKAALFLAAGMVISGNGGNQHIARYGGSAHSAMFTMLTLMVASLSLIGWPELSGFYSKETILNLAAICADPIADVAHTLLLLTAMLTSAYTTKLFYQCFMVDFSGSSVTPVRNVLPILAMAILLLDIMLKVWVGTNLLSGMLFFLPWGVKTLPFGLMVAGILTATAAVGSERFTLIRFCGSRWGFDQLFARSPVNPIFDLGRITWAIGDRGLLSVGNLRA</sequence>
<accession>P08739</accession>
<accession>Q34228</accession>
<comment type="function">
    <text evidence="1">Core subunit of the mitochondrial membrane respiratory chain NADH dehydrogenase (Complex I) that is believed to belong to the minimal assembly required for catalysis. Complex I functions in the transfer of electrons from NADH to the respiratory chain. The immediate electron acceptor for the enzyme is believed to be ubiquinone (By similarity).</text>
</comment>
<comment type="catalytic activity">
    <reaction>
        <text>a ubiquinone + NADH + 5 H(+)(in) = a ubiquinol + NAD(+) + 4 H(+)(out)</text>
        <dbReference type="Rhea" id="RHEA:29091"/>
        <dbReference type="Rhea" id="RHEA-COMP:9565"/>
        <dbReference type="Rhea" id="RHEA-COMP:9566"/>
        <dbReference type="ChEBI" id="CHEBI:15378"/>
        <dbReference type="ChEBI" id="CHEBI:16389"/>
        <dbReference type="ChEBI" id="CHEBI:17976"/>
        <dbReference type="ChEBI" id="CHEBI:57540"/>
        <dbReference type="ChEBI" id="CHEBI:57945"/>
        <dbReference type="EC" id="7.1.1.2"/>
    </reaction>
</comment>
<comment type="subcellular location">
    <subcellularLocation>
        <location evidence="1">Mitochondrion inner membrane</location>
        <topology evidence="1">Multi-pass membrane protein</topology>
    </subcellularLocation>
</comment>
<comment type="similarity">
    <text evidence="3">Belongs to the complex I subunit 5 family.</text>
</comment>
<comment type="sequence caution" evidence="3">
    <conflict type="erroneous initiation">
        <sequence resource="EMBL-CDS" id="CAA38641"/>
    </conflict>
</comment>
<protein>
    <recommendedName>
        <fullName>NADH-ubiquinone oxidoreductase chain 5</fullName>
        <ecNumber>7.1.1.2</ecNumber>
    </recommendedName>
    <alternativeName>
        <fullName>NADH dehydrogenase subunit 5</fullName>
    </alternativeName>
</protein>
<gene>
    <name type="primary">ND5</name>
    <name type="synonym">NAD5</name>
</gene>
<geneLocation type="mitochondrion"/>
<reference key="1">
    <citation type="journal article" date="1986" name="Nucleic Acids Res.">
        <title>Nucleotide sequence of a protein coding region in Chlamydomonas reinhardtii mitochondrial DNA.</title>
        <authorList>
            <person name="Boer P.H."/>
            <person name="Gray M.W."/>
        </authorList>
    </citation>
    <scope>NUCLEOTIDE SEQUENCE [GENOMIC DNA]</scope>
    <source>
        <strain>cw15</strain>
    </source>
</reference>
<reference key="2">
    <citation type="submission" date="1995-01" db="EMBL/GenBank/DDBJ databases">
        <authorList>
            <person name="Gray M.W."/>
        </authorList>
    </citation>
    <scope>NUCLEOTIDE SEQUENCE [GENOMIC DNA]</scope>
    <source>
        <strain>cw15</strain>
    </source>
</reference>
<reference key="3">
    <citation type="journal article" date="1985" name="Mol. Gen. Genet.">
        <title>Mitochondrial DNA of Chlamydomonas reinhardtii: sequence and arrangement of URF5 and the gene for cytochrome oxidase subunit I.</title>
        <authorList>
            <person name="Vahrenholz C."/>
            <person name="Pratje E."/>
            <person name="Michaelis G."/>
            <person name="Dujon B."/>
        </authorList>
    </citation>
    <scope>NUCLEOTIDE SEQUENCE [GENOMIC DNA]</scope>
    <source>
        <strain>cw15</strain>
    </source>
</reference>
<reference key="4">
    <citation type="journal article" date="1991" name="Curr. Genet.">
        <title>Short dispersed repeats localized in spacer regions of Chlamydomonas reinhardtii mitochondrial DNA.</title>
        <authorList>
            <person name="Boer P.H."/>
            <person name="Gray M.W."/>
        </authorList>
    </citation>
    <scope>NUCLEOTIDE SEQUENCE [GENOMIC DNA]</scope>
    <source>
        <strain>cw15</strain>
    </source>
</reference>
<reference key="5">
    <citation type="journal article" date="1986" name="EMBO J.">
        <title>The URF 5 gene of Chlamydomonas reinhardtii mitochondria: DNA sequence and mode of transcription.</title>
        <authorList>
            <person name="Boer P.H."/>
            <person name="Gray M.W."/>
        </authorList>
    </citation>
    <scope>NUCLEOTIDE SEQUENCE [GENOMIC DNA]</scope>
    <source>
        <strain>cw15</strain>
    </source>
</reference>
<evidence type="ECO:0000250" key="1"/>
<evidence type="ECO:0000255" key="2"/>
<evidence type="ECO:0000305" key="3"/>
<keyword id="KW-0002">3D-structure</keyword>
<keyword id="KW-0249">Electron transport</keyword>
<keyword id="KW-0472">Membrane</keyword>
<keyword id="KW-0496">Mitochondrion</keyword>
<keyword id="KW-0999">Mitochondrion inner membrane</keyword>
<keyword id="KW-0520">NAD</keyword>
<keyword id="KW-0679">Respiratory chain</keyword>
<keyword id="KW-1278">Translocase</keyword>
<keyword id="KW-0812">Transmembrane</keyword>
<keyword id="KW-1133">Transmembrane helix</keyword>
<keyword id="KW-0813">Transport</keyword>
<keyword id="KW-0830">Ubiquinone</keyword>